<dbReference type="EC" id="5.3.1.6" evidence="1"/>
<dbReference type="EMBL" id="CP001340">
    <property type="protein sequence ID" value="ACL95853.1"/>
    <property type="molecule type" value="Genomic_DNA"/>
</dbReference>
<dbReference type="RefSeq" id="WP_010920162.1">
    <property type="nucleotide sequence ID" value="NC_011916.1"/>
</dbReference>
<dbReference type="RefSeq" id="YP_002517761.1">
    <property type="nucleotide sequence ID" value="NC_011916.1"/>
</dbReference>
<dbReference type="SMR" id="B8GYT0"/>
<dbReference type="GeneID" id="7331457"/>
<dbReference type="KEGG" id="ccs:CCNA_02388"/>
<dbReference type="PATRIC" id="fig|565050.3.peg.2339"/>
<dbReference type="HOGENOM" id="CLU_056590_1_0_5"/>
<dbReference type="OrthoDB" id="5870696at2"/>
<dbReference type="PhylomeDB" id="B8GYT0"/>
<dbReference type="UniPathway" id="UPA00115">
    <property type="reaction ID" value="UER00412"/>
</dbReference>
<dbReference type="Proteomes" id="UP000001364">
    <property type="component" value="Chromosome"/>
</dbReference>
<dbReference type="GO" id="GO:0005829">
    <property type="term" value="C:cytosol"/>
    <property type="evidence" value="ECO:0007669"/>
    <property type="project" value="TreeGrafter"/>
</dbReference>
<dbReference type="GO" id="GO:0004751">
    <property type="term" value="F:ribose-5-phosphate isomerase activity"/>
    <property type="evidence" value="ECO:0007669"/>
    <property type="project" value="UniProtKB-UniRule"/>
</dbReference>
<dbReference type="GO" id="GO:0006014">
    <property type="term" value="P:D-ribose metabolic process"/>
    <property type="evidence" value="ECO:0007669"/>
    <property type="project" value="TreeGrafter"/>
</dbReference>
<dbReference type="GO" id="GO:0009052">
    <property type="term" value="P:pentose-phosphate shunt, non-oxidative branch"/>
    <property type="evidence" value="ECO:0007669"/>
    <property type="project" value="UniProtKB-UniRule"/>
</dbReference>
<dbReference type="CDD" id="cd01398">
    <property type="entry name" value="RPI_A"/>
    <property type="match status" value="1"/>
</dbReference>
<dbReference type="FunFam" id="3.40.50.1360:FF:000001">
    <property type="entry name" value="Ribose-5-phosphate isomerase A"/>
    <property type="match status" value="1"/>
</dbReference>
<dbReference type="Gene3D" id="3.30.70.260">
    <property type="match status" value="1"/>
</dbReference>
<dbReference type="Gene3D" id="3.40.50.1360">
    <property type="match status" value="1"/>
</dbReference>
<dbReference type="HAMAP" id="MF_00170">
    <property type="entry name" value="Rib_5P_isom_A"/>
    <property type="match status" value="1"/>
</dbReference>
<dbReference type="InterPro" id="IPR037171">
    <property type="entry name" value="NagB/RpiA_transferase-like"/>
</dbReference>
<dbReference type="InterPro" id="IPR020672">
    <property type="entry name" value="Ribose5P_isomerase_typA_subgr"/>
</dbReference>
<dbReference type="InterPro" id="IPR004788">
    <property type="entry name" value="Ribose5P_isomerase_type_A"/>
</dbReference>
<dbReference type="NCBIfam" id="NF001924">
    <property type="entry name" value="PRK00702.1"/>
    <property type="match status" value="1"/>
</dbReference>
<dbReference type="NCBIfam" id="TIGR00021">
    <property type="entry name" value="rpiA"/>
    <property type="match status" value="1"/>
</dbReference>
<dbReference type="PANTHER" id="PTHR11934">
    <property type="entry name" value="RIBOSE-5-PHOSPHATE ISOMERASE"/>
    <property type="match status" value="1"/>
</dbReference>
<dbReference type="PANTHER" id="PTHR11934:SF0">
    <property type="entry name" value="RIBOSE-5-PHOSPHATE ISOMERASE"/>
    <property type="match status" value="1"/>
</dbReference>
<dbReference type="Pfam" id="PF06026">
    <property type="entry name" value="Rib_5-P_isom_A"/>
    <property type="match status" value="1"/>
</dbReference>
<dbReference type="SUPFAM" id="SSF75445">
    <property type="entry name" value="D-ribose-5-phosphate isomerase (RpiA), lid domain"/>
    <property type="match status" value="1"/>
</dbReference>
<dbReference type="SUPFAM" id="SSF100950">
    <property type="entry name" value="NagB/RpiA/CoA transferase-like"/>
    <property type="match status" value="1"/>
</dbReference>
<proteinExistence type="inferred from homology"/>
<name>RPIA_CAUVN</name>
<feature type="chain" id="PRO_1000194694" description="Ribose-5-phosphate isomerase A">
    <location>
        <begin position="1"/>
        <end position="227"/>
    </location>
</feature>
<feature type="active site" description="Proton acceptor" evidence="1">
    <location>
        <position position="103"/>
    </location>
</feature>
<feature type="binding site" evidence="1">
    <location>
        <begin position="28"/>
        <end position="31"/>
    </location>
    <ligand>
        <name>substrate</name>
    </ligand>
</feature>
<feature type="binding site" evidence="1">
    <location>
        <begin position="81"/>
        <end position="84"/>
    </location>
    <ligand>
        <name>substrate</name>
    </ligand>
</feature>
<feature type="binding site" evidence="1">
    <location>
        <begin position="94"/>
        <end position="97"/>
    </location>
    <ligand>
        <name>substrate</name>
    </ligand>
</feature>
<feature type="binding site" evidence="1">
    <location>
        <position position="121"/>
    </location>
    <ligand>
        <name>substrate</name>
    </ligand>
</feature>
<sequence length="227" mass="23543">MSADDQKRISGEAAAELVENGMVVGLGTGSTAAWFVKALAARGLKDIRGVPTSDATAALARELGIPLAALDDVKTVDLTVDGADEIGPGLSLIKGGGAALLREKLVWEASTRCVVIADAAKRVPALGKFPLPIEVVRFGHVHTGYRLADIAAEFDLPPPRLRTAERGMVVTDGGNLIYDMASGKIEDPTALAAALKSVTGVVDHGLFLDLADEALVGTDEGVVRLQP</sequence>
<organism>
    <name type="scientific">Caulobacter vibrioides (strain NA1000 / CB15N)</name>
    <name type="common">Caulobacter crescentus</name>
    <dbReference type="NCBI Taxonomy" id="565050"/>
    <lineage>
        <taxon>Bacteria</taxon>
        <taxon>Pseudomonadati</taxon>
        <taxon>Pseudomonadota</taxon>
        <taxon>Alphaproteobacteria</taxon>
        <taxon>Caulobacterales</taxon>
        <taxon>Caulobacteraceae</taxon>
        <taxon>Caulobacter</taxon>
    </lineage>
</organism>
<comment type="function">
    <text evidence="1">Catalyzes the reversible conversion of ribose-5-phosphate to ribulose 5-phosphate.</text>
</comment>
<comment type="catalytic activity">
    <reaction evidence="1">
        <text>aldehydo-D-ribose 5-phosphate = D-ribulose 5-phosphate</text>
        <dbReference type="Rhea" id="RHEA:14657"/>
        <dbReference type="ChEBI" id="CHEBI:58121"/>
        <dbReference type="ChEBI" id="CHEBI:58273"/>
        <dbReference type="EC" id="5.3.1.6"/>
    </reaction>
</comment>
<comment type="pathway">
    <text evidence="1">Carbohydrate degradation; pentose phosphate pathway; D-ribose 5-phosphate from D-ribulose 5-phosphate (non-oxidative stage): step 1/1.</text>
</comment>
<comment type="subunit">
    <text evidence="1">Homodimer.</text>
</comment>
<comment type="similarity">
    <text evidence="1">Belongs to the ribose 5-phosphate isomerase family.</text>
</comment>
<evidence type="ECO:0000255" key="1">
    <source>
        <dbReference type="HAMAP-Rule" id="MF_00170"/>
    </source>
</evidence>
<accession>B8GYT0</accession>
<gene>
    <name evidence="1" type="primary">rpiA</name>
    <name type="ordered locus">CCNA_02388</name>
</gene>
<reference key="1">
    <citation type="journal article" date="2010" name="J. Bacteriol.">
        <title>The genetic basis of laboratory adaptation in Caulobacter crescentus.</title>
        <authorList>
            <person name="Marks M.E."/>
            <person name="Castro-Rojas C.M."/>
            <person name="Teiling C."/>
            <person name="Du L."/>
            <person name="Kapatral V."/>
            <person name="Walunas T.L."/>
            <person name="Crosson S."/>
        </authorList>
    </citation>
    <scope>NUCLEOTIDE SEQUENCE [LARGE SCALE GENOMIC DNA]</scope>
    <source>
        <strain>NA1000 / CB15N</strain>
    </source>
</reference>
<keyword id="KW-0413">Isomerase</keyword>
<keyword id="KW-1185">Reference proteome</keyword>
<protein>
    <recommendedName>
        <fullName evidence="1">Ribose-5-phosphate isomerase A</fullName>
        <ecNumber evidence="1">5.3.1.6</ecNumber>
    </recommendedName>
    <alternativeName>
        <fullName evidence="1">Phosphoriboisomerase A</fullName>
        <shortName evidence="1">PRI</shortName>
    </alternativeName>
</protein>